<dbReference type="EMBL" id="L19183">
    <property type="protein sequence ID" value="AAA16188.1"/>
    <property type="status" value="ALT_FRAME"/>
    <property type="molecule type" value="mRNA"/>
</dbReference>
<dbReference type="EMBL" id="AK299511">
    <property type="protein sequence ID" value="BAG61464.1"/>
    <property type="molecule type" value="mRNA"/>
</dbReference>
<dbReference type="EMBL" id="AC002094">
    <property type="status" value="NOT_ANNOTATED_CDS"/>
    <property type="molecule type" value="Genomic_DNA"/>
</dbReference>
<dbReference type="EMBL" id="BC091504">
    <property type="protein sequence ID" value="AAH91504.1"/>
    <property type="molecule type" value="mRNA"/>
</dbReference>
<dbReference type="CCDS" id="CCDS11226.2"/>
<dbReference type="PIR" id="I65744">
    <property type="entry name" value="I65744"/>
</dbReference>
<dbReference type="RefSeq" id="NP_055388.2">
    <property type="nucleotide sequence ID" value="NM_014573.3"/>
</dbReference>
<dbReference type="SMR" id="Q5BJF2"/>
<dbReference type="BioGRID" id="118158">
    <property type="interactions" value="110"/>
</dbReference>
<dbReference type="FunCoup" id="Q5BJF2">
    <property type="interactions" value="1200"/>
</dbReference>
<dbReference type="IntAct" id="Q5BJF2">
    <property type="interactions" value="81"/>
</dbReference>
<dbReference type="MINT" id="Q5BJF2"/>
<dbReference type="STRING" id="9606.ENSP00000226230"/>
<dbReference type="BindingDB" id="Q5BJF2"/>
<dbReference type="ChEMBL" id="CHEMBL4105907"/>
<dbReference type="DrugBank" id="DB14900">
    <property type="generic name" value="ISO-1 F-18"/>
</dbReference>
<dbReference type="DrugBank" id="DB13080">
    <property type="generic name" value="Roluperidone"/>
</dbReference>
<dbReference type="DrugCentral" id="Q5BJF2"/>
<dbReference type="GuidetoPHARMACOLOGY" id="2553"/>
<dbReference type="TCDB" id="8.A.93.1.1">
    <property type="family name" value="the sigma2 receptor or tmem97 (s2r) family"/>
</dbReference>
<dbReference type="iPTMnet" id="Q5BJF2"/>
<dbReference type="MetOSite" id="Q5BJF2"/>
<dbReference type="PhosphoSitePlus" id="Q5BJF2"/>
<dbReference type="SwissPalm" id="Q5BJF2"/>
<dbReference type="BioMuta" id="TMEM97"/>
<dbReference type="DMDM" id="74736009"/>
<dbReference type="jPOST" id="Q5BJF2"/>
<dbReference type="MassIVE" id="Q5BJF2"/>
<dbReference type="PaxDb" id="9606-ENSP00000226230"/>
<dbReference type="PeptideAtlas" id="Q5BJF2"/>
<dbReference type="ProteomicsDB" id="62679"/>
<dbReference type="Pumba" id="Q5BJF2"/>
<dbReference type="TopDownProteomics" id="Q5BJF2"/>
<dbReference type="Antibodypedia" id="50911">
    <property type="antibodies" value="107 antibodies from 13 providers"/>
</dbReference>
<dbReference type="DNASU" id="27346"/>
<dbReference type="Ensembl" id="ENST00000226230.8">
    <property type="protein sequence ID" value="ENSP00000226230.6"/>
    <property type="gene ID" value="ENSG00000109084.14"/>
</dbReference>
<dbReference type="GeneID" id="27346"/>
<dbReference type="KEGG" id="hsa:27346"/>
<dbReference type="MANE-Select" id="ENST00000226230.8">
    <property type="protein sequence ID" value="ENSP00000226230.6"/>
    <property type="RefSeq nucleotide sequence ID" value="NM_014573.3"/>
    <property type="RefSeq protein sequence ID" value="NP_055388.2"/>
</dbReference>
<dbReference type="UCSC" id="uc002hat.3">
    <property type="organism name" value="human"/>
</dbReference>
<dbReference type="AGR" id="HGNC:28106"/>
<dbReference type="CTD" id="27346"/>
<dbReference type="DisGeNET" id="27346"/>
<dbReference type="GeneCards" id="TMEM97"/>
<dbReference type="HGNC" id="HGNC:28106">
    <property type="gene designation" value="TMEM97"/>
</dbReference>
<dbReference type="HPA" id="ENSG00000109084">
    <property type="expression patterns" value="Tissue enhanced (liver, pancreas)"/>
</dbReference>
<dbReference type="MIM" id="612912">
    <property type="type" value="gene"/>
</dbReference>
<dbReference type="neXtProt" id="NX_Q5BJF2"/>
<dbReference type="OpenTargets" id="ENSG00000109084"/>
<dbReference type="PharmGKB" id="PA143485635"/>
<dbReference type="VEuPathDB" id="HostDB:ENSG00000109084"/>
<dbReference type="eggNOG" id="ENOG502S64S">
    <property type="taxonomic scope" value="Eukaryota"/>
</dbReference>
<dbReference type="GeneTree" id="ENSGT00390000007149"/>
<dbReference type="HOGENOM" id="CLU_086812_1_0_1"/>
<dbReference type="InParanoid" id="Q5BJF2"/>
<dbReference type="OMA" id="EFKDPMV"/>
<dbReference type="OrthoDB" id="433124at2759"/>
<dbReference type="PAN-GO" id="Q5BJF2">
    <property type="GO annotations" value="1 GO annotation based on evolutionary models"/>
</dbReference>
<dbReference type="PhylomeDB" id="Q5BJF2"/>
<dbReference type="TreeFam" id="TF300241"/>
<dbReference type="PathwayCommons" id="Q5BJF2"/>
<dbReference type="SignaLink" id="Q5BJF2"/>
<dbReference type="SIGNOR" id="Q5BJF2"/>
<dbReference type="BioGRID-ORCS" id="27346">
    <property type="hits" value="52 hits in 1167 CRISPR screens"/>
</dbReference>
<dbReference type="ChiTaRS" id="TMEM97">
    <property type="organism name" value="human"/>
</dbReference>
<dbReference type="GenomeRNAi" id="27346"/>
<dbReference type="Pharos" id="Q5BJF2">
    <property type="development level" value="Tchem"/>
</dbReference>
<dbReference type="PRO" id="PR:Q5BJF2"/>
<dbReference type="Proteomes" id="UP000005640">
    <property type="component" value="Chromosome 17"/>
</dbReference>
<dbReference type="RNAct" id="Q5BJF2">
    <property type="molecule type" value="protein"/>
</dbReference>
<dbReference type="Bgee" id="ENSG00000109084">
    <property type="expression patterns" value="Expressed in adrenal tissue and 204 other cell types or tissues"/>
</dbReference>
<dbReference type="ExpressionAtlas" id="Q5BJF2">
    <property type="expression patterns" value="baseline and differential"/>
</dbReference>
<dbReference type="GO" id="GO:0005783">
    <property type="term" value="C:endoplasmic reticulum"/>
    <property type="evidence" value="ECO:0000314"/>
    <property type="project" value="UniProtKB"/>
</dbReference>
<dbReference type="GO" id="GO:0005764">
    <property type="term" value="C:lysosome"/>
    <property type="evidence" value="ECO:0000314"/>
    <property type="project" value="UniProtKB"/>
</dbReference>
<dbReference type="GO" id="GO:0031965">
    <property type="term" value="C:nuclear membrane"/>
    <property type="evidence" value="ECO:0000314"/>
    <property type="project" value="UniProtKB"/>
</dbReference>
<dbReference type="GO" id="GO:0005886">
    <property type="term" value="C:plasma membrane"/>
    <property type="evidence" value="ECO:0000314"/>
    <property type="project" value="UniProtKB"/>
</dbReference>
<dbReference type="GO" id="GO:0005791">
    <property type="term" value="C:rough endoplasmic reticulum"/>
    <property type="evidence" value="ECO:0000314"/>
    <property type="project" value="UniProtKB"/>
</dbReference>
<dbReference type="GO" id="GO:0030867">
    <property type="term" value="C:rough endoplasmic reticulum membrane"/>
    <property type="evidence" value="ECO:0007669"/>
    <property type="project" value="UniProtKB-SubCell"/>
</dbReference>
<dbReference type="GO" id="GO:0015485">
    <property type="term" value="F:cholesterol binding"/>
    <property type="evidence" value="ECO:0000250"/>
    <property type="project" value="UniProtKB"/>
</dbReference>
<dbReference type="GO" id="GO:0008142">
    <property type="term" value="F:oxysterol binding"/>
    <property type="evidence" value="ECO:0000250"/>
    <property type="project" value="UniProtKB"/>
</dbReference>
<dbReference type="GO" id="GO:0042632">
    <property type="term" value="P:cholesterol homeostasis"/>
    <property type="evidence" value="ECO:0000314"/>
    <property type="project" value="UniProtKB"/>
</dbReference>
<dbReference type="GO" id="GO:0140077">
    <property type="term" value="P:positive regulation of lipoprotein transport"/>
    <property type="evidence" value="ECO:0000315"/>
    <property type="project" value="UniProtKB"/>
</dbReference>
<dbReference type="GO" id="GO:0090303">
    <property type="term" value="P:positive regulation of wound healing"/>
    <property type="evidence" value="ECO:0000315"/>
    <property type="project" value="UniProtKB"/>
</dbReference>
<dbReference type="GO" id="GO:0001558">
    <property type="term" value="P:regulation of cell growth"/>
    <property type="evidence" value="ECO:0000303"/>
    <property type="project" value="UniProtKB"/>
</dbReference>
<dbReference type="GO" id="GO:0032383">
    <property type="term" value="P:regulation of intracellular cholesterol transport"/>
    <property type="evidence" value="ECO:0000315"/>
    <property type="project" value="UniProtKB"/>
</dbReference>
<dbReference type="GO" id="GO:0032377">
    <property type="term" value="P:regulation of intracellular lipid transport"/>
    <property type="evidence" value="ECO:0000315"/>
    <property type="project" value="UniProtKB"/>
</dbReference>
<dbReference type="InterPro" id="IPR033118">
    <property type="entry name" value="EXPERA"/>
</dbReference>
<dbReference type="InterPro" id="IPR051987">
    <property type="entry name" value="Sigma-2_receptor-like"/>
</dbReference>
<dbReference type="InterPro" id="IPR016964">
    <property type="entry name" value="Sigma2_recept"/>
</dbReference>
<dbReference type="PANTHER" id="PTHR31204">
    <property type="entry name" value="SIGMA INTRACELLULAR RECEPTOR 2"/>
    <property type="match status" value="1"/>
</dbReference>
<dbReference type="PANTHER" id="PTHR31204:SF1">
    <property type="entry name" value="SIGMA INTRACELLULAR RECEPTOR 2"/>
    <property type="match status" value="1"/>
</dbReference>
<dbReference type="Pfam" id="PF05241">
    <property type="entry name" value="EBP"/>
    <property type="match status" value="1"/>
</dbReference>
<dbReference type="PIRSF" id="PIRSF031032">
    <property type="entry name" value="TMP_97_prd"/>
    <property type="match status" value="1"/>
</dbReference>
<dbReference type="PROSITE" id="PS51751">
    <property type="entry name" value="EXPERA"/>
    <property type="match status" value="1"/>
</dbReference>
<accession>Q5BJF2</accession>
<accession>B4DS02</accession>
<accession>Q07823</accession>
<organism>
    <name type="scientific">Homo sapiens</name>
    <name type="common">Human</name>
    <dbReference type="NCBI Taxonomy" id="9606"/>
    <lineage>
        <taxon>Eukaryota</taxon>
        <taxon>Metazoa</taxon>
        <taxon>Chordata</taxon>
        <taxon>Craniata</taxon>
        <taxon>Vertebrata</taxon>
        <taxon>Euteleostomi</taxon>
        <taxon>Mammalia</taxon>
        <taxon>Eutheria</taxon>
        <taxon>Euarchontoglires</taxon>
        <taxon>Primates</taxon>
        <taxon>Haplorrhini</taxon>
        <taxon>Catarrhini</taxon>
        <taxon>Hominidae</taxon>
        <taxon>Homo</taxon>
    </lineage>
</organism>
<name>SGMR2_HUMAN</name>
<sequence>MGAPATRRCVEWLLGLYFLSHIPITLFMDLQAVLPRELYPVEFRNLLKWYAKEFKDPLLQEPPAWFKSFLFCELVFQLPFFPIATYAFLKGSCKWIRTPAIIYSVHTMTTLIPILSTFLFEDFSKASGFKGQRPETLHERLTLVSVYAPYLLIPFILLIFMLRSPYYKYEEKRKKK</sequence>
<comment type="function">
    <text evidence="1 2 7 8 10 11 12 13 14 15 16 18 19 21 26">Sigma-2 receptor which contributes to ameliorate dysfunctional cellular processes and slow degenerative progression by regulating cell functions including cholesterol biosynthesis/trafficking, membrane trafficking, autophagy, lipid membrane-bound protein trafficking, and receptor stabilization at the cell surface (Probable) (PubMed:19583955, PubMed:23922215, PubMed:25620095, PubMed:27378690, PubMed:28559337, PubMed:30443021, PubMed:34233061, PubMed:34799735, PubMed:35970844). Forms a ternary complex with PGRMC1 receptor and low density lipoprotein receptor/LDLR at the plasma membrane, which increases LDLR-mediated LDL cholesterol internalization (PubMed:30443021). Decreases lysosomal sterol transporter NPC1 availability to the cell, probably through NPC1-binding, hence controlling lipid transport, including cholesterol and LBPA, outside of late endosome/lysosome (PubMed:19583955, PubMed:27378690). Binds regio- and stereoselective ligand 20(S)-hydroxycholesterol (20(S)-OHC) which enhances TMEM97-NPC1 interaction and decreases TMEM97-PGRMC1 and TMEM97-TSPO interactions, thereby linking OHC binding to cholesterol homeostasis (PubMed:34799735, PubMed:37047353). Also able to bind cholesterol (By similarity). Binds histatin 1 (Hst 1)/HN1 salivary peptide at the ER membrane, which is critical for increasing mitochondria-ER contacts and stimulating Hst1 wound healing properties (PubMed:34233061, PubMed:35970844). May alter the activity of some cytochrome P450 proteins (PubMed:22292588). Although shows homologies with sterol isomerases (EXPERA domain), not able to catalyze sterol isomerization (Probable) (PubMed:34880501). However, may act as sensors of these molecules (Probable) (PubMed:34880501). Acts as a quality control factor in the ER, promoting the proteolytic degradation of nonproductive and extramitochondrial precursor proteins in the ER membrane thus removing them from the ER surface (By similarity).</text>
</comment>
<comment type="subunit">
    <text evidence="2 7 11 12 13 16">Homodimer (By similarity). Interacts with NPC1; the interaction impairs NPC1-mediated cholesterol transport (PubMed:19583955, PubMed:34799735). Interacts with PGRMC1 and LDLR; the interaction increases LDL internalization (PubMed:30443021, PubMed:37047353). Interacts with histatin 1/HTN1; the interaction induces HTN1-stimulating wound healing (PubMed:34233061). Interacts with TSPO (PubMed:37047353). Forms a complex with TSPO and PGRMC1; the interaction occurs in MIA PaCa-2 cells but not in MCF7 cells (PubMed:37047353).</text>
</comment>
<comment type="interaction">
    <interactant intactId="EBI-12111910">
        <id>Q5BJF2</id>
    </interactant>
    <interactant intactId="EBI-17265552">
        <id>A6NM10-2</id>
        <label>AQP12B</label>
    </interactant>
    <organismsDiffer>false</organismsDiffer>
    <experiments>3</experiments>
</comment>
<comment type="interaction">
    <interactant intactId="EBI-12111910">
        <id>Q5BJF2</id>
    </interactant>
    <interactant intactId="EBI-12701138">
        <id>P41181</id>
        <label>AQP2</label>
    </interactant>
    <organismsDiffer>false</organismsDiffer>
    <experiments>3</experiments>
</comment>
<comment type="interaction">
    <interactant intactId="EBI-12111910">
        <id>Q5BJF2</id>
    </interactant>
    <interactant intactId="EBI-13059134">
        <id>Q13520</id>
        <label>AQP6</label>
    </interactant>
    <organismsDiffer>false</organismsDiffer>
    <experiments>3</experiments>
</comment>
<comment type="interaction">
    <interactant intactId="EBI-12111910">
        <id>Q5BJF2</id>
    </interactant>
    <interactant intactId="EBI-11343438">
        <id>Q3SXY8</id>
        <label>ARL13B</label>
    </interactant>
    <organismsDiffer>false</organismsDiffer>
    <experiments>3</experiments>
</comment>
<comment type="interaction">
    <interactant intactId="EBI-12111910">
        <id>Q5BJF2</id>
    </interactant>
    <interactant intactId="EBI-12239061">
        <id>Q8WWH4</id>
        <label>ASZ1</label>
    </interactant>
    <organismsDiffer>false</organismsDiffer>
    <experiments>3</experiments>
</comment>
<comment type="interaction">
    <interactant intactId="EBI-12111910">
        <id>Q5BJF2</id>
    </interactant>
    <interactant intactId="EBI-2512037">
        <id>O75787</id>
        <label>ATP6AP2</label>
    </interactant>
    <organismsDiffer>false</organismsDiffer>
    <experiments>3</experiments>
</comment>
<comment type="interaction">
    <interactant intactId="EBI-12111910">
        <id>Q5BJF2</id>
    </interactant>
    <interactant intactId="EBI-747430">
        <id>Q9BXK5</id>
        <label>BCL2L13</label>
    </interactant>
    <organismsDiffer>false</organismsDiffer>
    <experiments>3</experiments>
</comment>
<comment type="interaction">
    <interactant intactId="EBI-12111910">
        <id>Q5BJF2</id>
    </interactant>
    <interactant intactId="EBI-700794">
        <id>Q13323</id>
        <label>BIK</label>
    </interactant>
    <organismsDiffer>false</organismsDiffer>
    <experiments>3</experiments>
</comment>
<comment type="interaction">
    <interactant intactId="EBI-12111910">
        <id>Q5BJF2</id>
    </interactant>
    <interactant intactId="EBI-6657396">
        <id>P19397</id>
        <label>CD53</label>
    </interactant>
    <organismsDiffer>false</organismsDiffer>
    <experiments>3</experiments>
</comment>
<comment type="interaction">
    <interactant intactId="EBI-12111910">
        <id>Q5BJF2</id>
    </interactant>
    <interactant intactId="EBI-12222807">
        <id>P04233-2</id>
        <label>CD74</label>
    </interactant>
    <organismsDiffer>false</organismsDiffer>
    <experiments>3</experiments>
</comment>
<comment type="interaction">
    <interactant intactId="EBI-12111910">
        <id>Q5BJF2</id>
    </interactant>
    <interactant intactId="EBI-2130213">
        <id>Q99675</id>
        <label>CGRRF1</label>
    </interactant>
    <organismsDiffer>false</organismsDiffer>
    <experiments>3</experiments>
</comment>
<comment type="interaction">
    <interactant intactId="EBI-12111910">
        <id>Q5BJF2</id>
    </interactant>
    <interactant intactId="EBI-740744">
        <id>O95471</id>
        <label>CLDN7</label>
    </interactant>
    <organismsDiffer>false</organismsDiffer>
    <experiments>3</experiments>
</comment>
<comment type="interaction">
    <interactant intactId="EBI-12111910">
        <id>Q5BJF2</id>
    </interactant>
    <interactant intactId="EBI-11291074">
        <id>Q9BQT9</id>
        <label>CLSTN3</label>
    </interactant>
    <organismsDiffer>false</organismsDiffer>
    <experiments>3</experiments>
</comment>
<comment type="interaction">
    <interactant intactId="EBI-12111910">
        <id>Q5BJF2</id>
    </interactant>
    <interactant intactId="EBI-18013275">
        <id>Q7Z7G2</id>
        <label>CPLX4</label>
    </interactant>
    <organismsDiffer>false</organismsDiffer>
    <experiments>3</experiments>
</comment>
<comment type="interaction">
    <interactant intactId="EBI-12111910">
        <id>Q5BJF2</id>
    </interactant>
    <interactant intactId="EBI-3915253">
        <id>Q15125</id>
        <label>EBP</label>
    </interactant>
    <organismsDiffer>false</organismsDiffer>
    <experiments>3</experiments>
</comment>
<comment type="interaction">
    <interactant intactId="EBI-12111910">
        <id>Q5BJF2</id>
    </interactant>
    <interactant intactId="EBI-781551">
        <id>Q9Y282</id>
        <label>ERGIC3</label>
    </interactant>
    <organismsDiffer>false</organismsDiffer>
    <experiments>3</experiments>
</comment>
<comment type="interaction">
    <interactant intactId="EBI-12111910">
        <id>Q5BJF2</id>
    </interactant>
    <interactant intactId="EBI-18304435">
        <id>Q5JX71</id>
        <label>FAM209A</label>
    </interactant>
    <organismsDiffer>false</organismsDiffer>
    <experiments>3</experiments>
</comment>
<comment type="interaction">
    <interactant intactId="EBI-12111910">
        <id>Q5BJF2</id>
    </interactant>
    <interactant intactId="EBI-2833872">
        <id>O15552</id>
        <label>FFAR2</label>
    </interactant>
    <organismsDiffer>false</organismsDiffer>
    <experiments>3</experiments>
</comment>
<comment type="interaction">
    <interactant intactId="EBI-12111910">
        <id>Q5BJF2</id>
    </interactant>
    <interactant intactId="EBI-3918971">
        <id>Q9Y680</id>
        <label>FKBP7</label>
    </interactant>
    <organismsDiffer>false</organismsDiffer>
    <experiments>3</experiments>
</comment>
<comment type="interaction">
    <interactant intactId="EBI-12111910">
        <id>Q5BJF2</id>
    </interactant>
    <interactant intactId="EBI-6911547">
        <id>A2A2Y4</id>
        <label>FRMD3</label>
    </interactant>
    <organismsDiffer>false</organismsDiffer>
    <experiments>3</experiments>
</comment>
<comment type="interaction">
    <interactant intactId="EBI-12111910">
        <id>Q5BJF2</id>
    </interactant>
    <interactant intactId="EBI-12175685">
        <id>Q14802-3</id>
        <label>FXYD3</label>
    </interactant>
    <organismsDiffer>false</organismsDiffer>
    <experiments>3</experiments>
</comment>
<comment type="interaction">
    <interactant intactId="EBI-12111910">
        <id>Q5BJF2</id>
    </interactant>
    <interactant intactId="EBI-3908586">
        <id>O75712</id>
        <label>GJB3</label>
    </interactant>
    <organismsDiffer>false</organismsDiffer>
    <experiments>3</experiments>
</comment>
<comment type="interaction">
    <interactant intactId="EBI-12111910">
        <id>Q5BJF2</id>
    </interactant>
    <interactant intactId="EBI-3909454">
        <id>O95377</id>
        <label>GJB5</label>
    </interactant>
    <organismsDiffer>false</organismsDiffer>
    <experiments>3</experiments>
</comment>
<comment type="interaction">
    <interactant intactId="EBI-12111910">
        <id>Q5BJF2</id>
    </interactant>
    <interactant intactId="EBI-13345167">
        <id>Q8TDT2</id>
        <label>GPR152</label>
    </interactant>
    <organismsDiffer>false</organismsDiffer>
    <experiments>3</experiments>
</comment>
<comment type="interaction">
    <interactant intactId="EBI-12111910">
        <id>Q5BJF2</id>
    </interactant>
    <interactant intactId="EBI-2927498">
        <id>O60883</id>
        <label>GPR37L1</label>
    </interactant>
    <organismsDiffer>false</organismsDiffer>
    <experiments>3</experiments>
</comment>
<comment type="interaction">
    <interactant intactId="EBI-12111910">
        <id>Q5BJF2</id>
    </interactant>
    <interactant intactId="EBI-11721746">
        <id>Q8TED1</id>
        <label>GPX8</label>
    </interactant>
    <organismsDiffer>false</organismsDiffer>
    <experiments>3</experiments>
</comment>
<comment type="interaction">
    <interactant intactId="EBI-12111910">
        <id>Q5BJF2</id>
    </interactant>
    <interactant intactId="EBI-18053395">
        <id>Q7Z5P4</id>
        <label>HSD17B13</label>
    </interactant>
    <organismsDiffer>false</organismsDiffer>
    <experiments>3</experiments>
</comment>
<comment type="interaction">
    <interactant intactId="EBI-12111910">
        <id>Q5BJF2</id>
    </interactant>
    <interactant intactId="EBI-3905457">
        <id>P38484</id>
        <label>IFNGR2</label>
    </interactant>
    <organismsDiffer>false</organismsDiffer>
    <experiments>3</experiments>
</comment>
<comment type="interaction">
    <interactant intactId="EBI-12111910">
        <id>Q5BJF2</id>
    </interactant>
    <interactant intactId="EBI-8632435">
        <id>P43628</id>
        <label>KIR2DL3</label>
    </interactant>
    <organismsDiffer>false</organismsDiffer>
    <experiments>3</experiments>
</comment>
<comment type="interaction">
    <interactant intactId="EBI-12111910">
        <id>Q5BJF2</id>
    </interactant>
    <interactant intactId="EBI-17490413">
        <id>A8MZ59</id>
        <label>LEUTX</label>
    </interactant>
    <organismsDiffer>false</organismsDiffer>
    <experiments>3</experiments>
</comment>
<comment type="interaction">
    <interactant intactId="EBI-12111910">
        <id>Q5BJF2</id>
    </interactant>
    <interactant intactId="EBI-2820517">
        <id>Q8TAF8</id>
        <label>LHFPL5</label>
    </interactant>
    <organismsDiffer>false</organismsDiffer>
    <experiments>3</experiments>
</comment>
<comment type="interaction">
    <interactant intactId="EBI-12111910">
        <id>Q5BJF2</id>
    </interactant>
    <interactant intactId="EBI-2830566">
        <id>Q9H400</id>
        <label>LIME1</label>
    </interactant>
    <organismsDiffer>false</organismsDiffer>
    <experiments>3</experiments>
</comment>
<comment type="interaction">
    <interactant intactId="EBI-12111910">
        <id>Q5BJF2</id>
    </interactant>
    <interactant intactId="EBI-358888">
        <id>Q96AG4</id>
        <label>LRRC59</label>
    </interactant>
    <organismsDiffer>false</organismsDiffer>
    <experiments>3</experiments>
</comment>
<comment type="interaction">
    <interactant intactId="EBI-12111910">
        <id>Q5BJF2</id>
    </interactant>
    <interactant intactId="EBI-11956541">
        <id>Q9GZY8-5</id>
        <label>MFF</label>
    </interactant>
    <organismsDiffer>false</organismsDiffer>
    <experiments>3</experiments>
</comment>
<comment type="interaction">
    <interactant intactId="EBI-12111910">
        <id>Q5BJF2</id>
    </interactant>
    <interactant intactId="EBI-5454865">
        <id>Q6IN84</id>
        <label>MRM1</label>
    </interactant>
    <organismsDiffer>false</organismsDiffer>
    <experiments>3</experiments>
</comment>
<comment type="interaction">
    <interactant intactId="EBI-12111910">
        <id>Q5BJF2</id>
    </interactant>
    <interactant intactId="EBI-3923617">
        <id>Q9H2K0</id>
        <label>MTIF3</label>
    </interactant>
    <organismsDiffer>false</organismsDiffer>
    <experiments>3</experiments>
</comment>
<comment type="interaction">
    <interactant intactId="EBI-12111910">
        <id>Q5BJF2</id>
    </interactant>
    <interactant intactId="EBI-17263240">
        <id>P15941-11</id>
        <label>MUC1</label>
    </interactant>
    <organismsDiffer>false</organismsDiffer>
    <experiments>3</experiments>
</comment>
<comment type="interaction">
    <interactant intactId="EBI-12111910">
        <id>Q5BJF2</id>
    </interactant>
    <interactant intactId="EBI-741874">
        <id>Q9Y375</id>
        <label>NDUFAF1</label>
    </interactant>
    <organismsDiffer>false</organismsDiffer>
    <experiments>3</experiments>
</comment>
<comment type="interaction">
    <interactant intactId="EBI-12111910">
        <id>Q5BJF2</id>
    </interactant>
    <interactant intactId="EBI-2682365">
        <id>Q8N183</id>
        <label>NDUFAF2</label>
    </interactant>
    <organismsDiffer>false</organismsDiffer>
    <experiments>3</experiments>
</comment>
<comment type="interaction">
    <interactant intactId="EBI-12111910">
        <id>Q5BJF2</id>
    </interactant>
    <interactant intactId="EBI-10969203">
        <id>O14524-2</id>
        <label>NEMP1</label>
    </interactant>
    <organismsDiffer>false</organismsDiffer>
    <experiments>3</experiments>
</comment>
<comment type="interaction">
    <interactant intactId="EBI-12111910">
        <id>Q5BJF2</id>
    </interactant>
    <interactant intactId="EBI-16427978">
        <id>Q9BQ51</id>
        <label>PDCD1LG2</label>
    </interactant>
    <organismsDiffer>false</organismsDiffer>
    <experiments>3</experiments>
</comment>
<comment type="interaction">
    <interactant intactId="EBI-12111910">
        <id>Q5BJF2</id>
    </interactant>
    <interactant intactId="EBI-716063">
        <id>Q13113</id>
        <label>PDZK1IP1</label>
    </interactant>
    <organismsDiffer>false</organismsDiffer>
    <experiments>3</experiments>
</comment>
<comment type="interaction">
    <interactant intactId="EBI-12111910">
        <id>Q5BJF2</id>
    </interactant>
    <interactant intactId="EBI-12188331">
        <id>P60201-2</id>
        <label>PLP1</label>
    </interactant>
    <organismsDiffer>false</organismsDiffer>
    <experiments>3</experiments>
</comment>
<comment type="interaction">
    <interactant intactId="EBI-12111910">
        <id>Q5BJF2</id>
    </interactant>
    <interactant intactId="EBI-1644241">
        <id>Q9H902</id>
        <label>REEP1</label>
    </interactant>
    <organismsDiffer>false</organismsDiffer>
    <experiments>3</experiments>
</comment>
<comment type="interaction">
    <interactant intactId="EBI-12111910">
        <id>Q5BJF2</id>
    </interactant>
    <interactant intactId="EBI-15853497">
        <id>Q9UBD6</id>
        <label>RHCG</label>
    </interactant>
    <organismsDiffer>false</organismsDiffer>
    <experiments>3</experiments>
</comment>
<comment type="interaction">
    <interactant intactId="EBI-12111910">
        <id>Q5BJF2</id>
    </interactant>
    <interactant intactId="EBI-12055631">
        <id>Q96K19-5</id>
        <label>RNF170</label>
    </interactant>
    <organismsDiffer>false</organismsDiffer>
    <experiments>3</experiments>
</comment>
<comment type="interaction">
    <interactant intactId="EBI-12111910">
        <id>Q5BJF2</id>
    </interactant>
    <interactant intactId="EBI-3920694">
        <id>Q9NR31</id>
        <label>SAR1A</label>
    </interactant>
    <organismsDiffer>false</organismsDiffer>
    <experiments>3</experiments>
</comment>
<comment type="interaction">
    <interactant intactId="EBI-12111910">
        <id>Q5BJF2</id>
    </interactant>
    <interactant intactId="EBI-1046170">
        <id>O95470</id>
        <label>SGPL1</label>
    </interactant>
    <organismsDiffer>false</organismsDiffer>
    <experiments>3</experiments>
</comment>
<comment type="interaction">
    <interactant intactId="EBI-12111910">
        <id>Q5BJF2</id>
    </interactant>
    <interactant intactId="EBI-19141793">
        <id>Q13336-2</id>
        <label>SLC14A1</label>
    </interactant>
    <organismsDiffer>false</organismsDiffer>
    <experiments>3</experiments>
</comment>
<comment type="interaction">
    <interactant intactId="EBI-12111910">
        <id>Q5BJF2</id>
    </interactant>
    <interactant intactId="EBI-1573290">
        <id>Q15849</id>
        <label>SLC14A2</label>
    </interactant>
    <organismsDiffer>false</organismsDiffer>
    <experiments>4</experiments>
</comment>
<comment type="interaction">
    <interactant intactId="EBI-12111910">
        <id>Q5BJF2</id>
    </interactant>
    <interactant intactId="EBI-12078338">
        <id>O43278-2</id>
        <label>SPINT1</label>
    </interactant>
    <organismsDiffer>false</organismsDiffer>
    <experiments>3</experiments>
</comment>
<comment type="interaction">
    <interactant intactId="EBI-12111910">
        <id>Q5BJF2</id>
    </interactant>
    <interactant intactId="EBI-17280858">
        <id>Q8WWF3</id>
        <label>SSMEM1</label>
    </interactant>
    <organismsDiffer>false</organismsDiffer>
    <experiments>3</experiments>
</comment>
<comment type="interaction">
    <interactant intactId="EBI-12111910">
        <id>Q5BJF2</id>
    </interactant>
    <interactant intactId="EBI-2821497">
        <id>Q9BVX2</id>
        <label>TMEM106C</label>
    </interactant>
    <organismsDiffer>false</organismsDiffer>
    <experiments>3</experiments>
</comment>
<comment type="interaction">
    <interactant intactId="EBI-12111910">
        <id>Q5BJF2</id>
    </interactant>
    <interactant intactId="EBI-8638294">
        <id>Q9NUH8</id>
        <label>TMEM14B</label>
    </interactant>
    <organismsDiffer>false</organismsDiffer>
    <experiments>3</experiments>
</comment>
<comment type="interaction">
    <interactant intactId="EBI-12111910">
        <id>Q5BJF2</id>
    </interactant>
    <interactant intactId="EBI-3923061">
        <id>Q96B21</id>
        <label>TMEM45B</label>
    </interactant>
    <organismsDiffer>false</organismsDiffer>
    <experiments>3</experiments>
</comment>
<comment type="interaction">
    <interactant intactId="EBI-12111910">
        <id>Q5BJF2</id>
    </interactant>
    <interactant intactId="EBI-18178701">
        <id>Q4KMG9</id>
        <label>TMEM52B</label>
    </interactant>
    <organismsDiffer>false</organismsDiffer>
    <experiments>3</experiments>
</comment>
<comment type="interaction">
    <interactant intactId="EBI-12111910">
        <id>Q5BJF2</id>
    </interactant>
    <interactant intactId="EBI-8649725">
        <id>Q9BSE2</id>
        <label>TMEM79</label>
    </interactant>
    <organismsDiffer>false</organismsDiffer>
    <experiments>3</experiments>
</comment>
<comment type="interaction">
    <interactant intactId="EBI-12111910">
        <id>Q5BJF2</id>
    </interactant>
    <interactant intactId="EBI-6447886">
        <id>Q9Y320</id>
        <label>TMX2</label>
    </interactant>
    <organismsDiffer>false</organismsDiffer>
    <experiments>3</experiments>
</comment>
<comment type="interaction">
    <interactant intactId="EBI-12111910">
        <id>Q5BJF2</id>
    </interactant>
    <interactant intactId="EBI-744988">
        <id>Q9H7M9</id>
        <label>VSIR</label>
    </interactant>
    <organismsDiffer>false</organismsDiffer>
    <experiments>3</experiments>
</comment>
<comment type="subcellular location">
    <subcellularLocation>
        <location evidence="7 12 27">Rough endoplasmic reticulum membrane</location>
        <topology evidence="3">Multi-pass membrane protein</topology>
    </subcellularLocation>
    <subcellularLocation>
        <location evidence="7">Nucleus membrane</location>
        <topology evidence="3">Multi-pass membrane protein</topology>
    </subcellularLocation>
    <text evidence="7 11">Localized at cell membrane and in lysosomes in sterol-depleted cells when expression of endogenous TMEM97 is stimulated (PubMed:19583955). Localized at cell membrane, probably in lipid rafts, in serum-starved conditions (PubMed:30443021).</text>
</comment>
<comment type="tissue specificity">
    <text evidence="5 6 17 19">Widely expressed in normal tissues. Expressed in pancreatic, renal, breast, colon, ovarian surface epithelial (OSE) cells. Highly expressed in various proliferating cancer cells (PubMed:23922215).</text>
</comment>
<comment type="induction">
    <text evidence="6">Up-regulated in ovarian surface epithelial (OSE) cells with progesterone.</text>
</comment>
<comment type="domain">
    <text evidence="2">The four transmembrane helices are all kinked owing to the presence of proline residues in each, creating a ligand-binding cavity near the center of the protein.</text>
</comment>
<comment type="domain">
    <text evidence="14">The EXPERA domain doesn't possess any sterol isomerase catalytic activity.</text>
</comment>
<comment type="miscellaneous">
    <text evidence="11 22">Sigma receptors are classified into two subtypes (Sigma-1 and Sigma-2) based on their different pharmacological profile (PubMed:28559337). Sigma-2 receptor is identified by radioligand-binding studies as a binding site with high affinity for di-o-tolylguanidine (DTG) and haloperidol (PubMed:28559337, PubMed:30443021).</text>
</comment>
<comment type="miscellaneous">
    <text evidence="10 19 21">Binds numerous drugs and highly expressed in various proliferating cancer cells (PubMed:28559337). Potentially useful for cancer diagnostics or as target for anticancer therapeutics or adjuvant anticancer treatment agents (PubMed:23922215). Some exogenous ligands display a neuroprotective effect (PubMed:25620095).</text>
</comment>
<comment type="similarity">
    <text evidence="25">Belongs to the TMEM97/sigma-2 receptor family.</text>
</comment>
<comment type="caution">
    <text evidence="9 10 18">The molecular identity of the sigma-2 receptor has been unclear for a long time. It is now identified as TMEM97 (PubMed:28559337). Previously identified as PGRMC1 (AC O00264) (PubMed:22292588, PubMed:28007569).</text>
</comment>
<comment type="sequence caution" evidence="25">
    <conflict type="frameshift">
        <sequence resource="EMBL-CDS" id="AAA16188"/>
    </conflict>
</comment>
<evidence type="ECO:0000250" key="1">
    <source>
        <dbReference type="UniProtKB" id="Q12155"/>
    </source>
</evidence>
<evidence type="ECO:0000250" key="2">
    <source>
        <dbReference type="UniProtKB" id="Q3MHW7"/>
    </source>
</evidence>
<evidence type="ECO:0000255" key="3"/>
<evidence type="ECO:0000255" key="4">
    <source>
        <dbReference type="PROSITE-ProRule" id="PRU01087"/>
    </source>
</evidence>
<evidence type="ECO:0000269" key="5">
    <source>
    </source>
</evidence>
<evidence type="ECO:0000269" key="6">
    <source>
    </source>
</evidence>
<evidence type="ECO:0000269" key="7">
    <source>
    </source>
</evidence>
<evidence type="ECO:0000269" key="8">
    <source>
    </source>
</evidence>
<evidence type="ECO:0000269" key="9">
    <source>
    </source>
</evidence>
<evidence type="ECO:0000269" key="10">
    <source>
    </source>
</evidence>
<evidence type="ECO:0000269" key="11">
    <source>
    </source>
</evidence>
<evidence type="ECO:0000269" key="12">
    <source>
    </source>
</evidence>
<evidence type="ECO:0000269" key="13">
    <source>
    </source>
</evidence>
<evidence type="ECO:0000269" key="14">
    <source>
    </source>
</evidence>
<evidence type="ECO:0000269" key="15">
    <source>
    </source>
</evidence>
<evidence type="ECO:0000269" key="16">
    <source>
    </source>
</evidence>
<evidence type="ECO:0000269" key="17">
    <source>
    </source>
</evidence>
<evidence type="ECO:0000303" key="18">
    <source>
    </source>
</evidence>
<evidence type="ECO:0000303" key="19">
    <source>
    </source>
</evidence>
<evidence type="ECO:0000303" key="20">
    <source>
    </source>
</evidence>
<evidence type="ECO:0000303" key="21">
    <source>
    </source>
</evidence>
<evidence type="ECO:0000303" key="22">
    <source>
    </source>
</evidence>
<evidence type="ECO:0000303" key="23">
    <source>
    </source>
</evidence>
<evidence type="ECO:0000303" key="24">
    <source>
    </source>
</evidence>
<evidence type="ECO:0000305" key="25"/>
<evidence type="ECO:0000305" key="26">
    <source>
    </source>
</evidence>
<evidence type="ECO:0000305" key="27">
    <source>
    </source>
</evidence>
<evidence type="ECO:0000305" key="28">
    <source>
    </source>
</evidence>
<evidence type="ECO:0000312" key="29">
    <source>
        <dbReference type="HGNC" id="HGNC:28106"/>
    </source>
</evidence>
<protein>
    <recommendedName>
        <fullName evidence="25">Sigma intracellular receptor 2</fullName>
        <shortName evidence="23">S2R</shortName>
        <shortName evidence="22">Sigma-2 receptor</shortName>
        <shortName evidence="22">Sigma2 receptor</shortName>
    </recommendedName>
    <alternativeName>
        <fullName evidence="24">Meningioma-associated protein 30</fullName>
        <shortName evidence="24">MAC30</shortName>
    </alternativeName>
    <alternativeName>
        <fullName evidence="20">Transmembrane protein 97</fullName>
    </alternativeName>
</protein>
<proteinExistence type="evidence at protein level"/>
<reference key="1">
    <citation type="journal article" date="1993" name="Cell Growth Differ.">
        <title>Identification and characterization of genes differentially expressed in meningiomas.</title>
        <authorList>
            <person name="Murphy M."/>
            <person name="Pykett M.J."/>
            <person name="Harnish P."/>
            <person name="Zang K.D."/>
            <person name="George D.L."/>
        </authorList>
    </citation>
    <scope>NUCLEOTIDE SEQUENCE [MRNA]</scope>
    <scope>TISSUE SPECIFICITY</scope>
</reference>
<reference key="2">
    <citation type="journal article" date="2004" name="Nat. Genet.">
        <title>Complete sequencing and characterization of 21,243 full-length human cDNAs.</title>
        <authorList>
            <person name="Ota T."/>
            <person name="Suzuki Y."/>
            <person name="Nishikawa T."/>
            <person name="Otsuki T."/>
            <person name="Sugiyama T."/>
            <person name="Irie R."/>
            <person name="Wakamatsu A."/>
            <person name="Hayashi K."/>
            <person name="Sato H."/>
            <person name="Nagai K."/>
            <person name="Kimura K."/>
            <person name="Makita H."/>
            <person name="Sekine M."/>
            <person name="Obayashi M."/>
            <person name="Nishi T."/>
            <person name="Shibahara T."/>
            <person name="Tanaka T."/>
            <person name="Ishii S."/>
            <person name="Yamamoto J."/>
            <person name="Saito K."/>
            <person name="Kawai Y."/>
            <person name="Isono Y."/>
            <person name="Nakamura Y."/>
            <person name="Nagahari K."/>
            <person name="Murakami K."/>
            <person name="Yasuda T."/>
            <person name="Iwayanagi T."/>
            <person name="Wagatsuma M."/>
            <person name="Shiratori A."/>
            <person name="Sudo H."/>
            <person name="Hosoiri T."/>
            <person name="Kaku Y."/>
            <person name="Kodaira H."/>
            <person name="Kondo H."/>
            <person name="Sugawara M."/>
            <person name="Takahashi M."/>
            <person name="Kanda K."/>
            <person name="Yokoi T."/>
            <person name="Furuya T."/>
            <person name="Kikkawa E."/>
            <person name="Omura Y."/>
            <person name="Abe K."/>
            <person name="Kamihara K."/>
            <person name="Katsuta N."/>
            <person name="Sato K."/>
            <person name="Tanikawa M."/>
            <person name="Yamazaki M."/>
            <person name="Ninomiya K."/>
            <person name="Ishibashi T."/>
            <person name="Yamashita H."/>
            <person name="Murakawa K."/>
            <person name="Fujimori K."/>
            <person name="Tanai H."/>
            <person name="Kimata M."/>
            <person name="Watanabe M."/>
            <person name="Hiraoka S."/>
            <person name="Chiba Y."/>
            <person name="Ishida S."/>
            <person name="Ono Y."/>
            <person name="Takiguchi S."/>
            <person name="Watanabe S."/>
            <person name="Yosida M."/>
            <person name="Hotuta T."/>
            <person name="Kusano J."/>
            <person name="Kanehori K."/>
            <person name="Takahashi-Fujii A."/>
            <person name="Hara H."/>
            <person name="Tanase T.-O."/>
            <person name="Nomura Y."/>
            <person name="Togiya S."/>
            <person name="Komai F."/>
            <person name="Hara R."/>
            <person name="Takeuchi K."/>
            <person name="Arita M."/>
            <person name="Imose N."/>
            <person name="Musashino K."/>
            <person name="Yuuki H."/>
            <person name="Oshima A."/>
            <person name="Sasaki N."/>
            <person name="Aotsuka S."/>
            <person name="Yoshikawa Y."/>
            <person name="Matsunawa H."/>
            <person name="Ichihara T."/>
            <person name="Shiohata N."/>
            <person name="Sano S."/>
            <person name="Moriya S."/>
            <person name="Momiyama H."/>
            <person name="Satoh N."/>
            <person name="Takami S."/>
            <person name="Terashima Y."/>
            <person name="Suzuki O."/>
            <person name="Nakagawa S."/>
            <person name="Senoh A."/>
            <person name="Mizoguchi H."/>
            <person name="Goto Y."/>
            <person name="Shimizu F."/>
            <person name="Wakebe H."/>
            <person name="Hishigaki H."/>
            <person name="Watanabe T."/>
            <person name="Sugiyama A."/>
            <person name="Takemoto M."/>
            <person name="Kawakami B."/>
            <person name="Yamazaki M."/>
            <person name="Watanabe K."/>
            <person name="Kumagai A."/>
            <person name="Itakura S."/>
            <person name="Fukuzumi Y."/>
            <person name="Fujimori Y."/>
            <person name="Komiyama M."/>
            <person name="Tashiro H."/>
            <person name="Tanigami A."/>
            <person name="Fujiwara T."/>
            <person name="Ono T."/>
            <person name="Yamada K."/>
            <person name="Fujii Y."/>
            <person name="Ozaki K."/>
            <person name="Hirao M."/>
            <person name="Ohmori Y."/>
            <person name="Kawabata A."/>
            <person name="Hikiji T."/>
            <person name="Kobatake N."/>
            <person name="Inagaki H."/>
            <person name="Ikema Y."/>
            <person name="Okamoto S."/>
            <person name="Okitani R."/>
            <person name="Kawakami T."/>
            <person name="Noguchi S."/>
            <person name="Itoh T."/>
            <person name="Shigeta K."/>
            <person name="Senba T."/>
            <person name="Matsumura K."/>
            <person name="Nakajima Y."/>
            <person name="Mizuno T."/>
            <person name="Morinaga M."/>
            <person name="Sasaki M."/>
            <person name="Togashi T."/>
            <person name="Oyama M."/>
            <person name="Hata H."/>
            <person name="Watanabe M."/>
            <person name="Komatsu T."/>
            <person name="Mizushima-Sugano J."/>
            <person name="Satoh T."/>
            <person name="Shirai Y."/>
            <person name="Takahashi Y."/>
            <person name="Nakagawa K."/>
            <person name="Okumura K."/>
            <person name="Nagase T."/>
            <person name="Nomura N."/>
            <person name="Kikuchi H."/>
            <person name="Masuho Y."/>
            <person name="Yamashita R."/>
            <person name="Nakai K."/>
            <person name="Yada T."/>
            <person name="Nakamura Y."/>
            <person name="Ohara O."/>
            <person name="Isogai T."/>
            <person name="Sugano S."/>
        </authorList>
    </citation>
    <scope>NUCLEOTIDE SEQUENCE [LARGE SCALE MRNA]</scope>
    <source>
        <tissue>Brain</tissue>
    </source>
</reference>
<reference key="3">
    <citation type="journal article" date="2006" name="Nature">
        <title>DNA sequence of human chromosome 17 and analysis of rearrangement in the human lineage.</title>
        <authorList>
            <person name="Zody M.C."/>
            <person name="Garber M."/>
            <person name="Adams D.J."/>
            <person name="Sharpe T."/>
            <person name="Harrow J."/>
            <person name="Lupski J.R."/>
            <person name="Nicholson C."/>
            <person name="Searle S.M."/>
            <person name="Wilming L."/>
            <person name="Young S.K."/>
            <person name="Abouelleil A."/>
            <person name="Allen N.R."/>
            <person name="Bi W."/>
            <person name="Bloom T."/>
            <person name="Borowsky M.L."/>
            <person name="Bugalter B.E."/>
            <person name="Butler J."/>
            <person name="Chang J.L."/>
            <person name="Chen C.-K."/>
            <person name="Cook A."/>
            <person name="Corum B."/>
            <person name="Cuomo C.A."/>
            <person name="de Jong P.J."/>
            <person name="DeCaprio D."/>
            <person name="Dewar K."/>
            <person name="FitzGerald M."/>
            <person name="Gilbert J."/>
            <person name="Gibson R."/>
            <person name="Gnerre S."/>
            <person name="Goldstein S."/>
            <person name="Grafham D.V."/>
            <person name="Grocock R."/>
            <person name="Hafez N."/>
            <person name="Hagopian D.S."/>
            <person name="Hart E."/>
            <person name="Norman C.H."/>
            <person name="Humphray S."/>
            <person name="Jaffe D.B."/>
            <person name="Jones M."/>
            <person name="Kamal M."/>
            <person name="Khodiyar V.K."/>
            <person name="LaButti K."/>
            <person name="Laird G."/>
            <person name="Lehoczky J."/>
            <person name="Liu X."/>
            <person name="Lokyitsang T."/>
            <person name="Loveland J."/>
            <person name="Lui A."/>
            <person name="Macdonald P."/>
            <person name="Major J.E."/>
            <person name="Matthews L."/>
            <person name="Mauceli E."/>
            <person name="McCarroll S.A."/>
            <person name="Mihalev A.H."/>
            <person name="Mudge J."/>
            <person name="Nguyen C."/>
            <person name="Nicol R."/>
            <person name="O'Leary S.B."/>
            <person name="Osoegawa K."/>
            <person name="Schwartz D.C."/>
            <person name="Shaw-Smith C."/>
            <person name="Stankiewicz P."/>
            <person name="Steward C."/>
            <person name="Swarbreck D."/>
            <person name="Venkataraman V."/>
            <person name="Whittaker C.A."/>
            <person name="Yang X."/>
            <person name="Zimmer A.R."/>
            <person name="Bradley A."/>
            <person name="Hubbard T."/>
            <person name="Birren B.W."/>
            <person name="Rogers J."/>
            <person name="Lander E.S."/>
            <person name="Nusbaum C."/>
        </authorList>
    </citation>
    <scope>NUCLEOTIDE SEQUENCE [LARGE SCALE GENOMIC DNA]</scope>
</reference>
<reference key="4">
    <citation type="journal article" date="2004" name="Genome Res.">
        <title>The status, quality, and expansion of the NIH full-length cDNA project: the Mammalian Gene Collection (MGC).</title>
        <authorList>
            <consortium name="The MGC Project Team"/>
        </authorList>
    </citation>
    <scope>NUCLEOTIDE SEQUENCE [LARGE SCALE MRNA]</scope>
    <source>
        <tissue>Testis</tissue>
    </source>
</reference>
<reference key="5">
    <citation type="journal article" date="2004" name="Histol. Histopathol.">
        <title>Expression analysis of MAC30 in human pancreatic cancer and tumors of the gastrointestinal tract.</title>
        <authorList>
            <person name="Kayed H."/>
            <person name="Kleeff J."/>
            <person name="Ding J."/>
            <person name="Hammer J."/>
            <person name="Giese T."/>
            <person name="Zentgraf H."/>
            <person name="Buchler M.W."/>
            <person name="Friess H."/>
        </authorList>
    </citation>
    <scope>TISSUE SPECIFICITY</scope>
</reference>
<reference key="6">
    <citation type="journal article" date="2007" name="BMC Cancer">
        <title>Coordinate up-regulation of TMEM97 and cholesterol biosynthesis genes in normal ovarian surface epithelial cells treated with progesterone: implications for pathogenesis of ovarian cancer.</title>
        <authorList>
            <person name="Wilcox C.B."/>
            <person name="Feddes G.O."/>
            <person name="Willett-Brozick J.E."/>
            <person name="Hsu L.C."/>
            <person name="DeLoia J.A."/>
            <person name="Baysal B.E."/>
        </authorList>
    </citation>
    <scope>INDUCTION</scope>
    <scope>SUBCELLULAR LOCATION</scope>
    <scope>TISSUE SPECIFICITY</scope>
</reference>
<reference key="7">
    <citation type="journal article" date="2009" name="Cell Metab.">
        <title>Identification of cholesterol-regulating genes by targeted RNAi screening.</title>
        <authorList>
            <person name="Bartz F."/>
            <person name="Kern L."/>
            <person name="Erz D."/>
            <person name="Zhu M."/>
            <person name="Gilbert D."/>
            <person name="Meinhof T."/>
            <person name="Wirkner U."/>
            <person name="Erfle H."/>
            <person name="Muckenthaler M."/>
            <person name="Pepperkok R."/>
            <person name="Runz H."/>
        </authorList>
    </citation>
    <scope>FUNCTION</scope>
    <scope>INTERACTION WITH NPC1</scope>
    <scope>SUBCELLULAR LOCATION</scope>
</reference>
<reference key="8">
    <citation type="journal article" date="2011" name="BMC Syst. Biol.">
        <title>Initial characterization of the human central proteome.</title>
        <authorList>
            <person name="Burkard T.R."/>
            <person name="Planyavsky M."/>
            <person name="Kaupe I."/>
            <person name="Breitwieser F.P."/>
            <person name="Buerckstuemmer T."/>
            <person name="Bennett K.L."/>
            <person name="Superti-Furga G."/>
            <person name="Colinge J."/>
        </authorList>
    </citation>
    <scope>IDENTIFICATION BY MASS SPECTROMETRY [LARGE SCALE ANALYSIS]</scope>
</reference>
<reference key="9">
    <citation type="journal article" date="2012" name="Expert Opin. Drug Metab. Toxicol.">
        <title>S2R(Pgrmc1): the cytochrome-related sigma-2 receptor that regulates lipid and drug metabolism and hormone signaling.</title>
        <authorList>
            <person name="Ahmed I.S."/>
            <person name="Chamberlain C."/>
            <person name="Craven R.J."/>
        </authorList>
    </citation>
    <scope>FUNCTION</scope>
    <scope>REVIEW</scope>
</reference>
<reference key="10">
    <citation type="journal article" date="2014" name="Front. Genet.">
        <title>TM6SF2 and MAC30, new enzyme homologs in sterol metabolism and common metabolic disease.</title>
        <authorList>
            <person name="Sanchez-Pulido L."/>
            <person name="Ponting C.P."/>
        </authorList>
    </citation>
    <scope>POSSIBLE FUNCTION AS STEROL ISOMERASE</scope>
    <scope>IDENTIFICATION OF EXPERA DOMAIN</scope>
</reference>
<reference key="11">
    <citation type="journal article" date="2014" name="Med. Res. Rev.">
        <title>Sigma-2 receptor ligands and their perspectives in cancer diagnosis and therapy.</title>
        <authorList>
            <person name="Huang Y.S."/>
            <person name="Lu H.L."/>
            <person name="Zhang L.J."/>
            <person name="Wu Z."/>
        </authorList>
    </citation>
    <scope>REVIEW</scope>
    <scope>FUNCTION</scope>
    <scope>TISSUE SPECIFICITY</scope>
    <scope>MISCELLANEOUS</scope>
</reference>
<reference key="12">
    <citation type="journal article" date="2015" name="Curr. Med. Chem.">
        <title>Sigma-2 receptor ligands: neurobiological effects.</title>
        <authorList>
            <person name="Guo L."/>
            <person name="Zhen X."/>
        </authorList>
    </citation>
    <scope>REVIEW</scope>
    <scope>FUNCTION</scope>
    <scope>MISCELLANEOUS</scope>
</reference>
<reference key="13">
    <citation type="journal article" date="2015" name="Proteomics">
        <title>N-terminome analysis of the human mitochondrial proteome.</title>
        <authorList>
            <person name="Vaca Jacome A.S."/>
            <person name="Rabilloud T."/>
            <person name="Schaeffer-Reiss C."/>
            <person name="Rompais M."/>
            <person name="Ayoub D."/>
            <person name="Lane L."/>
            <person name="Bairoch A."/>
            <person name="Van Dorsselaer A."/>
            <person name="Carapito C."/>
        </authorList>
    </citation>
    <scope>IDENTIFICATION BY MASS SPECTROMETRY [LARGE SCALE ANALYSIS]</scope>
</reference>
<reference key="14">
    <citation type="journal article" date="2016" name="Hum. Mol. Genet.">
        <title>Reduction of TMEM97 increases NPC1 protein levels and restores cholesterol trafficking in Niemann-pick type C1 disease cells.</title>
        <authorList>
            <person name="Ebrahimi-Fakhari D."/>
            <person name="Wahlster L."/>
            <person name="Bartz F."/>
            <person name="Werenbeck-Ueding J."/>
            <person name="Praggastis M."/>
            <person name="Zhang J."/>
            <person name="Joggerst-Thomalla B."/>
            <person name="Theiss S."/>
            <person name="Grimm D."/>
            <person name="Ory D.S."/>
            <person name="Runz H."/>
        </authorList>
    </citation>
    <scope>FUNCTION</scope>
    <scope>SUBCELLULAR LOCATION</scope>
    <scope>MUTAGENESIS OF 172-LYS--LYS-176</scope>
</reference>
<reference key="15">
    <citation type="journal article" date="2017" name="Proc. Natl. Acad. Sci. U.S.A.">
        <title>Identification of the gene that codes for the sigma2 receptor.</title>
        <authorList>
            <person name="Alon A."/>
            <person name="Schmidt H.R."/>
            <person name="Wood M.D."/>
            <person name="Sahn J.J."/>
            <person name="Martin S.F."/>
            <person name="Kruse A.C."/>
        </authorList>
    </citation>
    <scope>IDENTIFICATION AS SIGMA-2 RECEPTOR</scope>
    <scope>MUTAGENESIS OF GLU-11; ASP-29; GLU-37; GLU-42; GLU-53; ASP-56; GLU-61; GLU-73; GLU-121; ASP-122; GLU-135; GLU-139; GLU-170 AND GLU-171</scope>
    <scope>MISCELLANEOUS</scope>
</reference>
<reference key="16">
    <citation type="journal article" date="2017" name="Pharmacol. Res.">
        <title>Sigma-2 receptor and progesterone receptor membrane component 1 (PGRMC1) are two different proteins: Proofs by fluorescent labeling and binding of sigma-2 receptor ligands to PGRMC1.</title>
        <authorList>
            <person name="Pati M.L."/>
            <person name="Groza D."/>
            <person name="Riganti C."/>
            <person name="Kopecka J."/>
            <person name="Niso M."/>
            <person name="Berardi F."/>
            <person name="Hager S."/>
            <person name="Heffeter P."/>
            <person name="Hirai M."/>
            <person name="Tsugawa H."/>
            <person name="Kabe Y."/>
            <person name="Suematsu M."/>
            <person name="Abate C."/>
        </authorList>
    </citation>
    <scope>CAUTION</scope>
</reference>
<reference key="17">
    <citation type="journal article" date="2018" name="Sci. Rep.">
        <title>Sigma-2 Receptor/TMEM97 and PGRMC-1 Increase the Rate of Internalization of LDL by LDL Receptor through the Formation of a Ternary Complex.</title>
        <authorList>
            <person name="Riad A."/>
            <person name="Zeng C."/>
            <person name="Weng C.C."/>
            <person name="Winters H."/>
            <person name="Xu K."/>
            <person name="Makvandi M."/>
            <person name="Metz T."/>
            <person name="Carlin S."/>
            <person name="Mach R.H."/>
        </authorList>
    </citation>
    <scope>FUNCTION</scope>
    <scope>SUBCELLULAR LOCATION</scope>
    <scope>INTERACTION WITH PGRMC1 AND LDLR</scope>
    <scope>MISCELLANEOUS</scope>
</reference>
<reference key="18">
    <citation type="journal article" date="2021" name="FEBS J.">
        <title>Histatin-1 is an endogenous ligand of the sigma-2 receptor.</title>
        <authorList>
            <person name="Son K.N."/>
            <person name="Lee H."/>
            <person name="Shah D."/>
            <person name="Kalmodia S."/>
            <person name="Miller R.C."/>
            <person name="Ali M."/>
            <person name="Balasubramaniam A."/>
            <person name="Cologna S.M."/>
            <person name="Kong H."/>
            <person name="Shukla D."/>
            <person name="Aakalu V.K."/>
        </authorList>
    </citation>
    <scope>FUNCTION</scope>
    <scope>SUBCELLULAR LOCATION</scope>
    <scope>INTERACTION WITH HTN1</scope>
</reference>
<reference key="19">
    <citation type="journal article" date="2021" name="Nat. Chem. Biol.">
        <title>A proteome-wide map of 20(S)-hydroxycholesterol interactors in cell membranes.</title>
        <authorList>
            <person name="Cheng Y.S."/>
            <person name="Zhang T."/>
            <person name="Ma X."/>
            <person name="Pratuangtham S."/>
            <person name="Zhang G.C."/>
            <person name="Ondrus A.A."/>
            <person name="Mafi A."/>
            <person name="Lomenick B."/>
            <person name="Jones J.J."/>
            <person name="Ondrus A.E."/>
        </authorList>
    </citation>
    <scope>FUNCTION</scope>
    <scope>INTERACTION WITH NCP1</scope>
</reference>
<reference key="20">
    <citation type="journal article" date="2021" name="Nature">
        <title>Structures of the sigma2 receptor enable docking for bioactive ligand discovery.</title>
        <authorList>
            <person name="Alon A."/>
            <person name="Lyu J."/>
            <person name="Braz J.M."/>
            <person name="Tummino T.A."/>
            <person name="Craik V."/>
            <person name="O'Meara M.J."/>
            <person name="Webb C.M."/>
            <person name="Radchenko D.S."/>
            <person name="Moroz Y.S."/>
            <person name="Huang X.P."/>
            <person name="Liu Y."/>
            <person name="Roth B.L."/>
            <person name="Irwin J.J."/>
            <person name="Basbaum A.I."/>
            <person name="Shoichet B.K."/>
            <person name="Kruse A.C."/>
        </authorList>
    </citation>
    <scope>FUNCTION</scope>
    <scope>DOMAIN</scope>
</reference>
<reference key="21">
    <citation type="journal article" date="2022" name="Int. J. Oral Sci.">
        <title>GPCR/endocytosis/ERK signaling/S2R is involved in the regulation of the internalization, mitochondria-targeting and -activating properties of human salivary histatin 1.</title>
        <authorList>
            <person name="Ma D."/>
            <person name="Sun W."/>
            <person name="Fu C."/>
            <person name="Nazmi K."/>
            <person name="Veerman E.C.I."/>
            <person name="Jaspers R.T."/>
            <person name="Bolscher J.G.M."/>
            <person name="Bikker F.J."/>
            <person name="Wu G."/>
        </authorList>
    </citation>
    <scope>FUNCTION</scope>
</reference>
<reference key="22">
    <citation type="journal article" date="2023" name="Int. J. Mol. Sci.">
        <title>Sigma-2 Receptor Ligand Binding Modulates Association between TSPO and TMEM97.</title>
        <authorList>
            <person name="Thejer B.M."/>
            <person name="Infantino V."/>
            <person name="Santarsiero A."/>
            <person name="Pappalardo I."/>
            <person name="Abatematteo F.S."/>
            <person name="Teakel S."/>
            <person name="Van Oosterum A."/>
            <person name="Mach R.H."/>
            <person name="Denora N."/>
            <person name="Lee B.C."/>
            <person name="Resta N."/>
            <person name="Bagnulo R."/>
            <person name="Niso M."/>
            <person name="Contino M."/>
            <person name="Montsch B."/>
            <person name="Heffeter P."/>
            <person name="Abate C."/>
            <person name="Cahill M.A."/>
        </authorList>
    </citation>
    <scope>FUNCTION</scope>
    <scope>INTERACTION WITH TSPO AND PGRMC1</scope>
</reference>
<gene>
    <name evidence="29" type="primary">TMEM97</name>
    <name evidence="24" type="synonym">MAC30</name>
    <name evidence="22" type="synonym">S2R</name>
</gene>
<keyword id="KW-0256">Endoplasmic reticulum</keyword>
<keyword id="KW-0472">Membrane</keyword>
<keyword id="KW-0539">Nucleus</keyword>
<keyword id="KW-1267">Proteomics identification</keyword>
<keyword id="KW-1185">Reference proteome</keyword>
<keyword id="KW-0812">Transmembrane</keyword>
<keyword id="KW-1133">Transmembrane helix</keyword>
<feature type="chain" id="PRO_0000254567" description="Sigma intracellular receptor 2">
    <location>
        <begin position="1"/>
        <end position="176"/>
    </location>
</feature>
<feature type="topological domain" description="Cytoplasmic" evidence="1">
    <location>
        <begin position="1"/>
        <end position="9"/>
    </location>
</feature>
<feature type="transmembrane region" description="Helical; Name=1" evidence="3">
    <location>
        <begin position="10"/>
        <end position="30"/>
    </location>
</feature>
<feature type="topological domain" description="Lumenal" evidence="1">
    <location>
        <begin position="31"/>
        <end position="68"/>
    </location>
</feature>
<feature type="transmembrane region" description="Helical; Name=2" evidence="3">
    <location>
        <begin position="69"/>
        <end position="89"/>
    </location>
</feature>
<feature type="topological domain" description="Cytoplasmic" evidence="1">
    <location>
        <begin position="90"/>
        <end position="99"/>
    </location>
</feature>
<feature type="transmembrane region" description="Helical; Name=3" evidence="3">
    <location>
        <begin position="100"/>
        <end position="120"/>
    </location>
</feature>
<feature type="topological domain" description="Lumenal" evidence="1">
    <location>
        <begin position="121"/>
        <end position="140"/>
    </location>
</feature>
<feature type="transmembrane region" description="Helical; Name=4" evidence="3">
    <location>
        <begin position="141"/>
        <end position="161"/>
    </location>
</feature>
<feature type="topological domain" description="Cytoplasmic" evidence="1">
    <location>
        <begin position="162"/>
        <end position="176"/>
    </location>
</feature>
<feature type="domain" description="EXPERA" evidence="4">
    <location>
        <begin position="10"/>
        <end position="158"/>
    </location>
</feature>
<feature type="region of interest" description="Required for interaction with Hst1/HTN1" evidence="12">
    <location>
        <begin position="108"/>
        <end position="176"/>
    </location>
</feature>
<feature type="short sequence motif" description="ER retention motif" evidence="8">
    <location>
        <begin position="172"/>
        <end position="176"/>
    </location>
</feature>
<feature type="binding site" evidence="2">
    <location>
        <position position="75"/>
    </location>
    <ligand>
        <name>cholesterol</name>
        <dbReference type="ChEBI" id="CHEBI:16113"/>
    </ligand>
</feature>
<feature type="binding site" evidence="2">
    <location>
        <position position="77"/>
    </location>
    <ligand>
        <name>cholesterol</name>
        <dbReference type="ChEBI" id="CHEBI:16113"/>
    </ligand>
</feature>
<feature type="site" description="Likely important for receptor folding" evidence="28">
    <location>
        <position position="56"/>
    </location>
</feature>
<feature type="site" description="Important for 20(S)-OHC binding and stereoselectivity" evidence="13">
    <location>
        <position position="150"/>
    </location>
</feature>
<feature type="mutagenesis site" description="Decreases DTG binding." evidence="10">
    <original>E</original>
    <variation>Q</variation>
    <location>
        <position position="11"/>
    </location>
</feature>
<feature type="mutagenesis site" description="Abolishes DTG binding." evidence="10">
    <original>D</original>
    <variation>N</variation>
    <location>
        <position position="29"/>
    </location>
</feature>
<feature type="mutagenesis site" description="No effect on DTG binding." evidence="10">
    <original>E</original>
    <variation>Q</variation>
    <location>
        <position position="37"/>
    </location>
</feature>
<feature type="mutagenesis site" description="No effect on DTG binding." evidence="10">
    <original>E</original>
    <variation>Q</variation>
    <location>
        <position position="42"/>
    </location>
</feature>
<feature type="mutagenesis site" description="No effect on DTG binding." evidence="10">
    <original>E</original>
    <variation>Q</variation>
    <location>
        <position position="53"/>
    </location>
</feature>
<feature type="mutagenesis site" description="Abolishes DTG binding." evidence="10">
    <original>D</original>
    <variation>N</variation>
    <location>
        <position position="56"/>
    </location>
</feature>
<feature type="mutagenesis site" description="No effect on DTG binding." evidence="10">
    <original>E</original>
    <variation>Q</variation>
    <location>
        <position position="61"/>
    </location>
</feature>
<feature type="mutagenesis site" description="No effect on DTG binding." evidence="10">
    <original>E</original>
    <variation>Q</variation>
    <location>
        <position position="73"/>
    </location>
</feature>
<feature type="mutagenesis site" description="No effect on DTG binding." evidence="10">
    <original>E</original>
    <variation>Q</variation>
    <location>
        <position position="121"/>
    </location>
</feature>
<feature type="mutagenesis site" description="Decreases DTG binding." evidence="10">
    <original>D</original>
    <variation>N</variation>
    <location>
        <position position="122"/>
    </location>
</feature>
<feature type="mutagenesis site" description="Decreases DTG binding." evidence="10">
    <original>E</original>
    <variation>Q</variation>
    <location>
        <position position="135"/>
    </location>
</feature>
<feature type="mutagenesis site" description="Decreases DTG binding." evidence="10">
    <original>E</original>
    <variation>Q</variation>
    <location>
        <position position="139"/>
    </location>
</feature>
<feature type="mutagenesis site" description="Decreases DTG binding." evidence="10">
    <original>E</original>
    <variation>Q</variation>
    <location>
        <position position="170"/>
    </location>
</feature>
<feature type="mutagenesis site" description="Decreases DTG binding." evidence="10">
    <original>E</original>
    <variation>Q</variation>
    <location>
        <position position="171"/>
    </location>
</feature>
<feature type="mutagenesis site" description="Mislocalization to late endosomes and lysosomes." evidence="8">
    <location>
        <begin position="172"/>
        <end position="176"/>
    </location>
</feature>
<feature type="sequence conflict" description="In Ref. 1; AAA16188." evidence="25" ref="1">
    <original>A</original>
    <variation>S</variation>
    <location>
        <position position="5"/>
    </location>
</feature>
<feature type="sequence conflict" description="In Ref. 1; AAA16188." evidence="25" ref="1">
    <original>L</original>
    <variation>V</variation>
    <location>
        <position position="34"/>
    </location>
</feature>
<feature type="sequence conflict" description="In Ref. 1; AAA16188." evidence="25" ref="1">
    <original>P</original>
    <variation>L</variation>
    <location>
        <position position="113"/>
    </location>
</feature>